<sequence length="249" mass="28560">MIIKVMTLFPEMFSGPLGNSIIQRAQENRILHIQCVNIRDYAENKHKKVDDYPFGGGPGMVMTPQPIVSCYESIVKEFQDKNHVEQPKVIYLSPKGKKFDQEMAERLSEENALILLCGHYEGIDQRVIDEIVTDEISIGDYVLTGGEIPAMVLIDAVARLIPGVLSQDASFEEESFYSGLLEYPQYTRPRVFRGRSVPDVLTSGNHSKIQEWRRNQSLELTFHRRPDLLKDFILTKKDQLFLEQIKSKK</sequence>
<proteinExistence type="inferred from homology"/>
<accession>A8MHC4</accession>
<comment type="function">
    <text evidence="1">Specifically methylates guanosine-37 in various tRNAs.</text>
</comment>
<comment type="catalytic activity">
    <reaction evidence="1">
        <text>guanosine(37) in tRNA + S-adenosyl-L-methionine = N(1)-methylguanosine(37) in tRNA + S-adenosyl-L-homocysteine + H(+)</text>
        <dbReference type="Rhea" id="RHEA:36899"/>
        <dbReference type="Rhea" id="RHEA-COMP:10145"/>
        <dbReference type="Rhea" id="RHEA-COMP:10147"/>
        <dbReference type="ChEBI" id="CHEBI:15378"/>
        <dbReference type="ChEBI" id="CHEBI:57856"/>
        <dbReference type="ChEBI" id="CHEBI:59789"/>
        <dbReference type="ChEBI" id="CHEBI:73542"/>
        <dbReference type="ChEBI" id="CHEBI:74269"/>
        <dbReference type="EC" id="2.1.1.228"/>
    </reaction>
</comment>
<comment type="subunit">
    <text evidence="1">Homodimer.</text>
</comment>
<comment type="subcellular location">
    <subcellularLocation>
        <location evidence="1">Cytoplasm</location>
    </subcellularLocation>
</comment>
<comment type="similarity">
    <text evidence="1">Belongs to the RNA methyltransferase TrmD family.</text>
</comment>
<name>TRMD_ALKOO</name>
<keyword id="KW-0963">Cytoplasm</keyword>
<keyword id="KW-0489">Methyltransferase</keyword>
<keyword id="KW-1185">Reference proteome</keyword>
<keyword id="KW-0949">S-adenosyl-L-methionine</keyword>
<keyword id="KW-0808">Transferase</keyword>
<keyword id="KW-0819">tRNA processing</keyword>
<organism>
    <name type="scientific">Alkaliphilus oremlandii (strain OhILAs)</name>
    <name type="common">Clostridium oremlandii (strain OhILAs)</name>
    <dbReference type="NCBI Taxonomy" id="350688"/>
    <lineage>
        <taxon>Bacteria</taxon>
        <taxon>Bacillati</taxon>
        <taxon>Bacillota</taxon>
        <taxon>Clostridia</taxon>
        <taxon>Peptostreptococcales</taxon>
        <taxon>Natronincolaceae</taxon>
        <taxon>Alkaliphilus</taxon>
    </lineage>
</organism>
<protein>
    <recommendedName>
        <fullName evidence="1">tRNA (guanine-N(1)-)-methyltransferase</fullName>
        <ecNumber evidence="1">2.1.1.228</ecNumber>
    </recommendedName>
    <alternativeName>
        <fullName evidence="1">M1G-methyltransferase</fullName>
    </alternativeName>
    <alternativeName>
        <fullName evidence="1">tRNA [GM37] methyltransferase</fullName>
    </alternativeName>
</protein>
<reference key="1">
    <citation type="submission" date="2007-10" db="EMBL/GenBank/DDBJ databases">
        <title>Complete genome of Alkaliphilus oremlandii OhILAs.</title>
        <authorList>
            <person name="Copeland A."/>
            <person name="Lucas S."/>
            <person name="Lapidus A."/>
            <person name="Barry K."/>
            <person name="Detter J.C."/>
            <person name="Glavina del Rio T."/>
            <person name="Hammon N."/>
            <person name="Israni S."/>
            <person name="Dalin E."/>
            <person name="Tice H."/>
            <person name="Pitluck S."/>
            <person name="Chain P."/>
            <person name="Malfatti S."/>
            <person name="Shin M."/>
            <person name="Vergez L."/>
            <person name="Schmutz J."/>
            <person name="Larimer F."/>
            <person name="Land M."/>
            <person name="Hauser L."/>
            <person name="Kyrpides N."/>
            <person name="Mikhailova N."/>
            <person name="Stolz J.F."/>
            <person name="Dawson A."/>
            <person name="Fisher E."/>
            <person name="Crable B."/>
            <person name="Perera E."/>
            <person name="Lisak J."/>
            <person name="Ranganathan M."/>
            <person name="Basu P."/>
            <person name="Richardson P."/>
        </authorList>
    </citation>
    <scope>NUCLEOTIDE SEQUENCE [LARGE SCALE GENOMIC DNA]</scope>
    <source>
        <strain>OhILAs</strain>
    </source>
</reference>
<gene>
    <name evidence="1" type="primary">trmD</name>
    <name type="ordered locus">Clos_1467</name>
</gene>
<dbReference type="EC" id="2.1.1.228" evidence="1"/>
<dbReference type="EMBL" id="CP000853">
    <property type="protein sequence ID" value="ABW19011.1"/>
    <property type="molecule type" value="Genomic_DNA"/>
</dbReference>
<dbReference type="RefSeq" id="WP_012159323.1">
    <property type="nucleotide sequence ID" value="NC_009922.1"/>
</dbReference>
<dbReference type="SMR" id="A8MHC4"/>
<dbReference type="STRING" id="350688.Clos_1467"/>
<dbReference type="KEGG" id="aoe:Clos_1467"/>
<dbReference type="eggNOG" id="COG0336">
    <property type="taxonomic scope" value="Bacteria"/>
</dbReference>
<dbReference type="HOGENOM" id="CLU_047363_0_1_9"/>
<dbReference type="OrthoDB" id="9807416at2"/>
<dbReference type="Proteomes" id="UP000000269">
    <property type="component" value="Chromosome"/>
</dbReference>
<dbReference type="GO" id="GO:0005829">
    <property type="term" value="C:cytosol"/>
    <property type="evidence" value="ECO:0007669"/>
    <property type="project" value="TreeGrafter"/>
</dbReference>
<dbReference type="GO" id="GO:0052906">
    <property type="term" value="F:tRNA (guanine(37)-N1)-methyltransferase activity"/>
    <property type="evidence" value="ECO:0007669"/>
    <property type="project" value="UniProtKB-UniRule"/>
</dbReference>
<dbReference type="GO" id="GO:0002939">
    <property type="term" value="P:tRNA N1-guanine methylation"/>
    <property type="evidence" value="ECO:0007669"/>
    <property type="project" value="TreeGrafter"/>
</dbReference>
<dbReference type="CDD" id="cd18080">
    <property type="entry name" value="TrmD-like"/>
    <property type="match status" value="1"/>
</dbReference>
<dbReference type="FunFam" id="1.10.1270.20:FF:000001">
    <property type="entry name" value="tRNA (guanine-N(1)-)-methyltransferase"/>
    <property type="match status" value="1"/>
</dbReference>
<dbReference type="FunFam" id="3.40.1280.10:FF:000001">
    <property type="entry name" value="tRNA (guanine-N(1)-)-methyltransferase"/>
    <property type="match status" value="1"/>
</dbReference>
<dbReference type="Gene3D" id="3.40.1280.10">
    <property type="match status" value="1"/>
</dbReference>
<dbReference type="Gene3D" id="1.10.1270.20">
    <property type="entry name" value="tRNA(m1g37)methyltransferase, domain 2"/>
    <property type="match status" value="1"/>
</dbReference>
<dbReference type="HAMAP" id="MF_00605">
    <property type="entry name" value="TrmD"/>
    <property type="match status" value="1"/>
</dbReference>
<dbReference type="InterPro" id="IPR029028">
    <property type="entry name" value="Alpha/beta_knot_MTases"/>
</dbReference>
<dbReference type="InterPro" id="IPR023148">
    <property type="entry name" value="tRNA_m1G_MeTrfase_C_sf"/>
</dbReference>
<dbReference type="InterPro" id="IPR002649">
    <property type="entry name" value="tRNA_m1G_MeTrfase_TrmD"/>
</dbReference>
<dbReference type="InterPro" id="IPR029026">
    <property type="entry name" value="tRNA_m1G_MTases_N"/>
</dbReference>
<dbReference type="InterPro" id="IPR016009">
    <property type="entry name" value="tRNA_MeTrfase_TRMD/TRM10"/>
</dbReference>
<dbReference type="NCBIfam" id="NF000648">
    <property type="entry name" value="PRK00026.1"/>
    <property type="match status" value="1"/>
</dbReference>
<dbReference type="NCBIfam" id="TIGR00088">
    <property type="entry name" value="trmD"/>
    <property type="match status" value="1"/>
</dbReference>
<dbReference type="PANTHER" id="PTHR46417">
    <property type="entry name" value="TRNA (GUANINE-N(1)-)-METHYLTRANSFERASE"/>
    <property type="match status" value="1"/>
</dbReference>
<dbReference type="PANTHER" id="PTHR46417:SF1">
    <property type="entry name" value="TRNA (GUANINE-N(1)-)-METHYLTRANSFERASE"/>
    <property type="match status" value="1"/>
</dbReference>
<dbReference type="Pfam" id="PF01746">
    <property type="entry name" value="tRNA_m1G_MT"/>
    <property type="match status" value="1"/>
</dbReference>
<dbReference type="PIRSF" id="PIRSF000386">
    <property type="entry name" value="tRNA_mtase"/>
    <property type="match status" value="1"/>
</dbReference>
<dbReference type="SUPFAM" id="SSF75217">
    <property type="entry name" value="alpha/beta knot"/>
    <property type="match status" value="1"/>
</dbReference>
<feature type="chain" id="PRO_1000061267" description="tRNA (guanine-N(1)-)-methyltransferase">
    <location>
        <begin position="1"/>
        <end position="249"/>
    </location>
</feature>
<feature type="binding site" evidence="1">
    <location>
        <position position="118"/>
    </location>
    <ligand>
        <name>S-adenosyl-L-methionine</name>
        <dbReference type="ChEBI" id="CHEBI:59789"/>
    </ligand>
</feature>
<feature type="binding site" evidence="1">
    <location>
        <begin position="138"/>
        <end position="143"/>
    </location>
    <ligand>
        <name>S-adenosyl-L-methionine</name>
        <dbReference type="ChEBI" id="CHEBI:59789"/>
    </ligand>
</feature>
<evidence type="ECO:0000255" key="1">
    <source>
        <dbReference type="HAMAP-Rule" id="MF_00605"/>
    </source>
</evidence>